<reference key="1">
    <citation type="journal article" date="2008" name="J. Bacteriol.">
        <title>The complete genome sequence of Escherichia coli DH10B: insights into the biology of a laboratory workhorse.</title>
        <authorList>
            <person name="Durfee T."/>
            <person name="Nelson R."/>
            <person name="Baldwin S."/>
            <person name="Plunkett G. III"/>
            <person name="Burland V."/>
            <person name="Mau B."/>
            <person name="Petrosino J.F."/>
            <person name="Qin X."/>
            <person name="Muzny D.M."/>
            <person name="Ayele M."/>
            <person name="Gibbs R.A."/>
            <person name="Csorgo B."/>
            <person name="Posfai G."/>
            <person name="Weinstock G.M."/>
            <person name="Blattner F.R."/>
        </authorList>
    </citation>
    <scope>NUCLEOTIDE SEQUENCE [LARGE SCALE GENOMIC DNA]</scope>
    <source>
        <strain>K12 / DH10B</strain>
    </source>
</reference>
<name>HCAB_ECODH</name>
<keyword id="KW-0058">Aromatic hydrocarbons catabolism</keyword>
<keyword id="KW-0520">NAD</keyword>
<keyword id="KW-0560">Oxidoreductase</keyword>
<organism>
    <name type="scientific">Escherichia coli (strain K12 / DH10B)</name>
    <dbReference type="NCBI Taxonomy" id="316385"/>
    <lineage>
        <taxon>Bacteria</taxon>
        <taxon>Pseudomonadati</taxon>
        <taxon>Pseudomonadota</taxon>
        <taxon>Gammaproteobacteria</taxon>
        <taxon>Enterobacterales</taxon>
        <taxon>Enterobacteriaceae</taxon>
        <taxon>Escherichia</taxon>
    </lineage>
</organism>
<proteinExistence type="inferred from homology"/>
<comment type="function">
    <text evidence="1">Converts 3-phenylpropionate-dihydrodiol (PP-dihydrodiol) and cinnamic acid-dihydrodiol (CI-dihydrodiol) into 3-(2,3-dihydroxylphenyl)propanoic acid (DHPP) and 2,3-dihydroxicinnamic acid (DHCI), respectively.</text>
</comment>
<comment type="catalytic activity">
    <reaction evidence="1">
        <text>3-(cis-5,6-dihydroxycyclohexa-1,3-dien-1-yl)propanoate + NAD(+) = 3-(2,3-dihydroxyphenyl)propanoate + NADH + H(+)</text>
        <dbReference type="Rhea" id="RHEA:25062"/>
        <dbReference type="ChEBI" id="CHEBI:15378"/>
        <dbReference type="ChEBI" id="CHEBI:46951"/>
        <dbReference type="ChEBI" id="CHEBI:57540"/>
        <dbReference type="ChEBI" id="CHEBI:57945"/>
        <dbReference type="ChEBI" id="CHEBI:60087"/>
        <dbReference type="EC" id="1.3.1.87"/>
    </reaction>
</comment>
<comment type="catalytic activity">
    <reaction evidence="1">
        <text>(2E)-3-(cis-5,6-dihydroxycyclohexa-1,3-dien-1-yl)prop-2-enoate + NAD(+) = (2E)-3-(2,3-dihydroxyphenyl)prop-2-enoate + NADH + H(+)</text>
        <dbReference type="Rhea" id="RHEA:25066"/>
        <dbReference type="ChEBI" id="CHEBI:15378"/>
        <dbReference type="ChEBI" id="CHEBI:57540"/>
        <dbReference type="ChEBI" id="CHEBI:57945"/>
        <dbReference type="ChEBI" id="CHEBI:58642"/>
        <dbReference type="ChEBI" id="CHEBI:61451"/>
        <dbReference type="EC" id="1.3.1.87"/>
    </reaction>
</comment>
<comment type="pathway">
    <text evidence="1">Aromatic compound metabolism; 3-phenylpropanoate degradation.</text>
</comment>
<comment type="similarity">
    <text evidence="1">Belongs to the short-chain dehydrogenases/reductases (SDR) family.</text>
</comment>
<feature type="chain" id="PRO_1000186967" description="3-phenylpropionate-dihydrodiol/cinnamic acid-dihydrodiol dehydrogenase">
    <location>
        <begin position="1"/>
        <end position="270"/>
    </location>
</feature>
<feature type="active site" description="Proton acceptor" evidence="1">
    <location>
        <position position="156"/>
    </location>
</feature>
<feature type="binding site" evidence="1">
    <location>
        <begin position="10"/>
        <end position="34"/>
    </location>
    <ligand>
        <name>NAD(+)</name>
        <dbReference type="ChEBI" id="CHEBI:57540"/>
    </ligand>
</feature>
<feature type="binding site" evidence="1">
    <location>
        <position position="143"/>
    </location>
    <ligand>
        <name>substrate</name>
    </ligand>
</feature>
<dbReference type="EC" id="1.3.1.87" evidence="1"/>
<dbReference type="EMBL" id="CP000948">
    <property type="protein sequence ID" value="ACB03693.1"/>
    <property type="molecule type" value="Genomic_DNA"/>
</dbReference>
<dbReference type="RefSeq" id="WP_001281379.1">
    <property type="nucleotide sequence ID" value="NC_010473.1"/>
</dbReference>
<dbReference type="SMR" id="B1XB16"/>
<dbReference type="KEGG" id="ecd:ECDH10B_2708"/>
<dbReference type="HOGENOM" id="CLU_010194_1_0_6"/>
<dbReference type="UniPathway" id="UPA00714"/>
<dbReference type="GO" id="GO:0018498">
    <property type="term" value="F:2,3-dihydroxy-2,3-dihydro-phenylpropionate dehydrogenase activity"/>
    <property type="evidence" value="ECO:0007669"/>
    <property type="project" value="UniProtKB-UniRule"/>
</dbReference>
<dbReference type="GO" id="GO:0019380">
    <property type="term" value="P:3-phenylpropionate catabolic process"/>
    <property type="evidence" value="ECO:0007669"/>
    <property type="project" value="UniProtKB-UniRule"/>
</dbReference>
<dbReference type="CDD" id="cd05348">
    <property type="entry name" value="BphB-like_SDR_c"/>
    <property type="match status" value="1"/>
</dbReference>
<dbReference type="FunFam" id="3.40.50.720:FF:000151">
    <property type="entry name" value="3-phenylpropionate-dihydrodiol/cinnamic acid-dihydrodiol dehydrogenase"/>
    <property type="match status" value="1"/>
</dbReference>
<dbReference type="Gene3D" id="3.40.50.720">
    <property type="entry name" value="NAD(P)-binding Rossmann-like Domain"/>
    <property type="match status" value="1"/>
</dbReference>
<dbReference type="HAMAP" id="MF_01647">
    <property type="entry name" value="HcaB"/>
    <property type="match status" value="1"/>
</dbReference>
<dbReference type="InterPro" id="IPR047950">
    <property type="entry name" value="BphB-like_SDR"/>
</dbReference>
<dbReference type="InterPro" id="IPR023643">
    <property type="entry name" value="Dihydrodiol_DH_HcaB"/>
</dbReference>
<dbReference type="InterPro" id="IPR036291">
    <property type="entry name" value="NAD(P)-bd_dom_sf"/>
</dbReference>
<dbReference type="InterPro" id="IPR020904">
    <property type="entry name" value="Sc_DH/Rdtase_CS"/>
</dbReference>
<dbReference type="InterPro" id="IPR002347">
    <property type="entry name" value="SDR_fam"/>
</dbReference>
<dbReference type="NCBIfam" id="NF042950">
    <property type="entry name" value="3PPDhyd_Dh_HcaB"/>
    <property type="match status" value="1"/>
</dbReference>
<dbReference type="NCBIfam" id="NF004849">
    <property type="entry name" value="PRK06200.1"/>
    <property type="match status" value="1"/>
</dbReference>
<dbReference type="PANTHER" id="PTHR43943:SF17">
    <property type="entry name" value="3-PHENYLPROPIONATE-DIHYDRODIOL_CINNAMIC ACID-DIHYDRODIOL DEHYDROGENASE"/>
    <property type="match status" value="1"/>
</dbReference>
<dbReference type="PANTHER" id="PTHR43943">
    <property type="entry name" value="DEHYDROGENASE/REDUCTASE (SDR FAMILY) MEMBER 4"/>
    <property type="match status" value="1"/>
</dbReference>
<dbReference type="Pfam" id="PF00106">
    <property type="entry name" value="adh_short"/>
    <property type="match status" value="1"/>
</dbReference>
<dbReference type="PRINTS" id="PR00081">
    <property type="entry name" value="GDHRDH"/>
</dbReference>
<dbReference type="PRINTS" id="PR00080">
    <property type="entry name" value="SDRFAMILY"/>
</dbReference>
<dbReference type="SUPFAM" id="SSF51735">
    <property type="entry name" value="NAD(P)-binding Rossmann-fold domains"/>
    <property type="match status" value="1"/>
</dbReference>
<dbReference type="PROSITE" id="PS00061">
    <property type="entry name" value="ADH_SHORT"/>
    <property type="match status" value="1"/>
</dbReference>
<gene>
    <name evidence="1" type="primary">hcaB</name>
    <name type="ordered locus">ECDH10B_2708</name>
</gene>
<accession>B1XB16</accession>
<evidence type="ECO:0000255" key="1">
    <source>
        <dbReference type="HAMAP-Rule" id="MF_01647"/>
    </source>
</evidence>
<protein>
    <recommendedName>
        <fullName evidence="1">3-phenylpropionate-dihydrodiol/cinnamic acid-dihydrodiol dehydrogenase</fullName>
        <ecNumber evidence="1">1.3.1.87</ecNumber>
    </recommendedName>
    <alternativeName>
        <fullName evidence="1">2,3-dihydroxy-2,3-dihydrophenylpropionate dehydrogenase</fullName>
    </alternativeName>
    <alternativeName>
        <fullName evidence="1">3-(cis-5,6-dihydroxycyclohexa-1,3-dien-1-yl)propanoate dehydrogenase</fullName>
    </alternativeName>
    <alternativeName>
        <fullName evidence="1">CI-dihydrodiol dehydrogenase</fullName>
    </alternativeName>
    <alternativeName>
        <fullName evidence="1">Cis-3-(2-carboxyethenyl)-3,5-cyclohexadiene-1,2-diol dehydrogenase</fullName>
    </alternativeName>
    <alternativeName>
        <fullName evidence="1">Cis-3-(2-carboxyethyl)-3,5-cyclohexadiene-1,2-diol dehydrogenase</fullName>
    </alternativeName>
    <alternativeName>
        <fullName evidence="1">PP-dihydrodiol dehydrogenase</fullName>
    </alternativeName>
</protein>
<sequence length="270" mass="28500">MSDLHNESIFITGGGSGLGLALVERFIEEGAQVATLELSAAKVASLRQRFGEHILAVEGNVTCYADYQRAVDQILTRSGKLDCFIGNAGIWDHNASLVNTPAETLETGFHELFNVNVLGYLLGAKACAPALIASEGSMIFTLSNAAWYPGGGGPLYTASKHAATGLIRQLAYELAPKVRVNGVGPCGMASDLRGPQALGQSETSIMQSLTPEKIAAILPLQFFPQPADFTGPYVMLTSRRNNRALSGVMINADAGLAIRGIRHVAAGLDL</sequence>